<comment type="function">
    <text evidence="1">Binds to all microtubule populations.</text>
</comment>
<comment type="subcellular location">
    <subcellularLocation>
        <location evidence="1">Nucleus</location>
    </subcellularLocation>
    <subcellularLocation>
        <location evidence="1">Cytoplasm</location>
    </subcellularLocation>
    <subcellularLocation>
        <location evidence="1">Cytoplasm</location>
        <location evidence="1">Cytoskeleton</location>
    </subcellularLocation>
    <subcellularLocation>
        <location evidence="1">Cytoplasm</location>
        <location evidence="1">Cytoskeleton</location>
        <location evidence="1">Spindle</location>
    </subcellularLocation>
</comment>
<comment type="similarity">
    <text evidence="3">Belongs to the MAP Jupiter family.</text>
</comment>
<name>JUPIT_DROPE</name>
<sequence length="361" mass="38176">MISNYDITDSKSSSKVLRPPGGGSSDIFGSDMPQTPRNVKNRMVSNIFSVEKDNSVKNTVRQGAHRFYFIGDNPRRGQKPVDSHSRLFGEPMRPITPGKNHMKSSIPFGQNTETAAAAQKLLTNGSSTANTTNGHQYNGKSGSVSSASSSVSSSTENLKMNSGSRSVYIRNMSNNEKSKQTKTDTAGCPLTPVASAAAPPPADVLGIDLPCLDLEVGDVPKDNEIYTETGKHDVNIQTRRDSGSNVEQPHSLEKMRSTANLKEPLALCPDYVKEVHGPCNARNPITGLGLNGDGVGGLKPVKQKIREGNPVTGEGYRAGGTDYIKAAGSTNSGSVGNGDNGGNSVVNKNRVPPGGYSSGLW</sequence>
<proteinExistence type="inferred from homology"/>
<reference evidence="4" key="1">
    <citation type="journal article" date="2007" name="Nature">
        <title>Evolution of genes and genomes on the Drosophila phylogeny.</title>
        <authorList>
            <consortium name="Drosophila 12 genomes consortium"/>
        </authorList>
    </citation>
    <scope>NUCLEOTIDE SEQUENCE [LARGE SCALE GENOMIC DNA]</scope>
    <source>
        <strain>MSH-3 / Tucson 14011-0111.49</strain>
    </source>
</reference>
<evidence type="ECO:0000250" key="1">
    <source>
        <dbReference type="UniProtKB" id="Q9I7K0"/>
    </source>
</evidence>
<evidence type="ECO:0000256" key="2">
    <source>
        <dbReference type="SAM" id="MobiDB-lite"/>
    </source>
</evidence>
<evidence type="ECO:0000305" key="3"/>
<evidence type="ECO:0000312" key="4">
    <source>
        <dbReference type="EMBL" id="EDW38061.1"/>
    </source>
</evidence>
<keyword id="KW-0963">Cytoplasm</keyword>
<keyword id="KW-0206">Cytoskeleton</keyword>
<keyword id="KW-0493">Microtubule</keyword>
<keyword id="KW-0539">Nucleus</keyword>
<keyword id="KW-0597">Phosphoprotein</keyword>
<keyword id="KW-1185">Reference proteome</keyword>
<dbReference type="EMBL" id="CH479185">
    <property type="protein sequence ID" value="EDW38061.1"/>
    <property type="molecule type" value="Genomic_DNA"/>
</dbReference>
<dbReference type="RefSeq" id="XP_002019427.1">
    <property type="nucleotide sequence ID" value="XM_002019391.1"/>
</dbReference>
<dbReference type="STRING" id="7234.B4GMI7"/>
<dbReference type="EnsemblMetazoa" id="FBtr0178010">
    <property type="protein sequence ID" value="FBpp0176502"/>
    <property type="gene ID" value="FBgn0150002"/>
</dbReference>
<dbReference type="eggNOG" id="ENOG502S7TC">
    <property type="taxonomic scope" value="Eukaryota"/>
</dbReference>
<dbReference type="HOGENOM" id="CLU_076719_0_0_1"/>
<dbReference type="OMA" id="GANDFHQ"/>
<dbReference type="OrthoDB" id="6367565at2759"/>
<dbReference type="PhylomeDB" id="B4GMI7"/>
<dbReference type="ChiTaRS" id="Jupiter">
    <property type="organism name" value="fly"/>
</dbReference>
<dbReference type="Proteomes" id="UP000008744">
    <property type="component" value="Unassembled WGS sequence"/>
</dbReference>
<dbReference type="GO" id="GO:0005829">
    <property type="term" value="C:cytosol"/>
    <property type="evidence" value="ECO:0000250"/>
    <property type="project" value="UniProtKB"/>
</dbReference>
<dbReference type="GO" id="GO:0005874">
    <property type="term" value="C:microtubule"/>
    <property type="evidence" value="ECO:0007669"/>
    <property type="project" value="UniProtKB-KW"/>
</dbReference>
<dbReference type="GO" id="GO:0005875">
    <property type="term" value="C:microtubule associated complex"/>
    <property type="evidence" value="ECO:0000250"/>
    <property type="project" value="UniProtKB"/>
</dbReference>
<dbReference type="GO" id="GO:0005634">
    <property type="term" value="C:nucleus"/>
    <property type="evidence" value="ECO:0000250"/>
    <property type="project" value="UniProtKB"/>
</dbReference>
<dbReference type="GO" id="GO:0005819">
    <property type="term" value="C:spindle"/>
    <property type="evidence" value="ECO:0007669"/>
    <property type="project" value="UniProtKB-SubCell"/>
</dbReference>
<dbReference type="GO" id="GO:0008017">
    <property type="term" value="F:microtubule binding"/>
    <property type="evidence" value="ECO:0000250"/>
    <property type="project" value="UniProtKB"/>
</dbReference>
<dbReference type="GO" id="GO:0005200">
    <property type="term" value="F:structural constituent of cytoskeleton"/>
    <property type="evidence" value="ECO:0000250"/>
    <property type="project" value="UniProtKB"/>
</dbReference>
<dbReference type="GO" id="GO:0031116">
    <property type="term" value="P:positive regulation of microtubule polymerization"/>
    <property type="evidence" value="ECO:0000250"/>
    <property type="project" value="UniProtKB"/>
</dbReference>
<dbReference type="InterPro" id="IPR033335">
    <property type="entry name" value="JUPITER"/>
</dbReference>
<dbReference type="PANTHER" id="PTHR34930">
    <property type="entry name" value="GEO05313P1"/>
    <property type="match status" value="1"/>
</dbReference>
<dbReference type="PANTHER" id="PTHR34930:SF2">
    <property type="entry name" value="MICROTUBULE-ASSOCIATED PROTEIN JUPITER"/>
    <property type="match status" value="1"/>
</dbReference>
<dbReference type="Pfam" id="PF17054">
    <property type="entry name" value="JUPITER"/>
    <property type="match status" value="1"/>
</dbReference>
<protein>
    <recommendedName>
        <fullName evidence="1">Microtubule-associated protein Jupiter</fullName>
    </recommendedName>
</protein>
<feature type="chain" id="PRO_0000355130" description="Microtubule-associated protein Jupiter">
    <location>
        <begin position="1"/>
        <end position="361"/>
    </location>
</feature>
<feature type="region of interest" description="Disordered" evidence="2">
    <location>
        <begin position="1"/>
        <end position="38"/>
    </location>
</feature>
<feature type="region of interest" description="Disordered" evidence="2">
    <location>
        <begin position="70"/>
        <end position="99"/>
    </location>
</feature>
<feature type="region of interest" description="Disordered" evidence="2">
    <location>
        <begin position="125"/>
        <end position="165"/>
    </location>
</feature>
<feature type="region of interest" description="Disordered" evidence="2">
    <location>
        <begin position="328"/>
        <end position="361"/>
    </location>
</feature>
<feature type="compositionally biased region" description="Polar residues" evidence="2">
    <location>
        <begin position="1"/>
        <end position="15"/>
    </location>
</feature>
<feature type="compositionally biased region" description="Basic and acidic residues" evidence="2">
    <location>
        <begin position="73"/>
        <end position="87"/>
    </location>
</feature>
<feature type="compositionally biased region" description="Low complexity" evidence="2">
    <location>
        <begin position="125"/>
        <end position="134"/>
    </location>
</feature>
<feature type="compositionally biased region" description="Low complexity" evidence="2">
    <location>
        <begin position="141"/>
        <end position="154"/>
    </location>
</feature>
<feature type="compositionally biased region" description="Polar residues" evidence="2">
    <location>
        <begin position="155"/>
        <end position="165"/>
    </location>
</feature>
<feature type="modified residue" description="Phosphoserine" evidence="1">
    <location>
        <position position="24"/>
    </location>
</feature>
<feature type="modified residue" description="Phosphothreonine" evidence="1">
    <location>
        <position position="35"/>
    </location>
</feature>
<feature type="modified residue" description="Phosphothreonine" evidence="1">
    <location>
        <position position="96"/>
    </location>
</feature>
<feature type="modified residue" description="Phosphoserine" evidence="1">
    <location>
        <position position="105"/>
    </location>
</feature>
<feature type="modified residue" description="Phosphoserine" evidence="1">
    <location>
        <position position="143"/>
    </location>
</feature>
<feature type="modified residue" description="Phosphoserine" evidence="1">
    <location>
        <position position="154"/>
    </location>
</feature>
<organism>
    <name type="scientific">Drosophila persimilis</name>
    <name type="common">Fruit fly</name>
    <dbReference type="NCBI Taxonomy" id="7234"/>
    <lineage>
        <taxon>Eukaryota</taxon>
        <taxon>Metazoa</taxon>
        <taxon>Ecdysozoa</taxon>
        <taxon>Arthropoda</taxon>
        <taxon>Hexapoda</taxon>
        <taxon>Insecta</taxon>
        <taxon>Pterygota</taxon>
        <taxon>Neoptera</taxon>
        <taxon>Endopterygota</taxon>
        <taxon>Diptera</taxon>
        <taxon>Brachycera</taxon>
        <taxon>Muscomorpha</taxon>
        <taxon>Ephydroidea</taxon>
        <taxon>Drosophilidae</taxon>
        <taxon>Drosophila</taxon>
        <taxon>Sophophora</taxon>
    </lineage>
</organism>
<accession>B4GMI7</accession>
<gene>
    <name evidence="1" type="primary">Jupiter</name>
    <name type="ORF">GL12395</name>
</gene>